<reference key="1">
    <citation type="journal article" date="1972" name="J. Biol. Chem.">
        <title>Snake venom toxins. The amino acid sequences of two toxins from Dendroaspis polylepis polylepis (black mamba) venom.</title>
        <authorList>
            <person name="Strydom D.J."/>
        </authorList>
    </citation>
    <scope>PROTEIN SEQUENCE</scope>
    <scope>SUBCELLULAR LOCATION</scope>
    <source>
        <tissue>Venom</tissue>
    </source>
</reference>
<reference key="2">
    <citation type="journal article" date="1988" name="Eur. J. Biochem.">
        <title>Secondary structure determination for alpha-neurotoxin from Dendroaspis polylepis polylepis based on sequence-specific 1H-nuclear-magnetic-resonance assignments.</title>
        <authorList>
            <person name="Labhardt A.L."/>
            <person name="Hunziker-Kwik E.H."/>
            <person name="Wuethrich K."/>
        </authorList>
    </citation>
    <scope>STRUCTURE BY NMR</scope>
    <scope>DISULFIDE BONDS</scope>
</reference>
<reference key="3">
    <citation type="journal article" date="1992" name="J. Mol. Biol.">
        <title>Nuclear magnetic resonance solution structure of the alpha-neurotoxin from the black mamba (Dendroaspis polylepis polylepis).</title>
        <authorList>
            <person name="Brown L.R."/>
            <person name="Wuethrich K."/>
        </authorList>
    </citation>
    <scope>STRUCTURE BY NMR</scope>
    <scope>DISULFIDE BONDS</scope>
</reference>
<comment type="function">
    <text evidence="1">Binds to muscle nicotinic acetylcholine receptor (nAChR) and inhibit acetylcholine from binding to the receptor, thereby impairing neuromuscular transmission.</text>
</comment>
<comment type="subcellular location">
    <subcellularLocation>
        <location evidence="4">Secreted</location>
    </subcellularLocation>
</comment>
<comment type="tissue specificity">
    <text evidence="5">Expressed by the venom gland.</text>
</comment>
<comment type="toxic dose">
    <text>LD(50) is 0.09 mg/kg by subcutaneous injection.</text>
</comment>
<comment type="similarity">
    <text evidence="5">Belongs to the three-finger toxin family. Short-chain subfamily. Type I alpha-neurotoxin sub-subfamily.</text>
</comment>
<proteinExistence type="evidence at protein level"/>
<evidence type="ECO:0000250" key="1">
    <source>
        <dbReference type="UniProtKB" id="P60775"/>
    </source>
</evidence>
<evidence type="ECO:0000269" key="2">
    <source>
    </source>
</evidence>
<evidence type="ECO:0000269" key="3">
    <source>
    </source>
</evidence>
<evidence type="ECO:0000269" key="4">
    <source>
    </source>
</evidence>
<evidence type="ECO:0000305" key="5"/>
<evidence type="ECO:0000312" key="6">
    <source>
        <dbReference type="PDB" id="1NTX"/>
    </source>
</evidence>
<evidence type="ECO:0007829" key="7">
    <source>
        <dbReference type="PDB" id="1NTX"/>
    </source>
</evidence>
<feature type="chain" id="PRO_0000093574" description="Short neurotoxin 1" evidence="4">
    <location>
        <begin position="1"/>
        <end position="60"/>
    </location>
</feature>
<feature type="disulfide bond" evidence="2 3 6">
    <location>
        <begin position="3"/>
        <end position="22"/>
    </location>
</feature>
<feature type="disulfide bond" evidence="2 3 6">
    <location>
        <begin position="17"/>
        <end position="39"/>
    </location>
</feature>
<feature type="disulfide bond" evidence="2 3 6">
    <location>
        <begin position="41"/>
        <end position="52"/>
    </location>
</feature>
<feature type="disulfide bond" evidence="2 3 6">
    <location>
        <begin position="53"/>
        <end position="58"/>
    </location>
</feature>
<feature type="strand" evidence="7">
    <location>
        <begin position="2"/>
        <end position="4"/>
    </location>
</feature>
<feature type="strand" evidence="7">
    <location>
        <begin position="14"/>
        <end position="16"/>
    </location>
</feature>
<feature type="strand" evidence="7">
    <location>
        <begin position="22"/>
        <end position="28"/>
    </location>
</feature>
<feature type="strand" evidence="7">
    <location>
        <begin position="30"/>
        <end position="40"/>
    </location>
</feature>
<feature type="strand" evidence="7">
    <location>
        <begin position="48"/>
        <end position="55"/>
    </location>
</feature>
<protein>
    <recommendedName>
        <fullName>Short neurotoxin 1</fullName>
    </recommendedName>
    <alternativeName>
        <fullName>Neurotoxin alpha</fullName>
    </alternativeName>
</protein>
<name>3S11_DENPO</name>
<keyword id="KW-0002">3D-structure</keyword>
<keyword id="KW-0008">Acetylcholine receptor inhibiting toxin</keyword>
<keyword id="KW-0903">Direct protein sequencing</keyword>
<keyword id="KW-1015">Disulfide bond</keyword>
<keyword id="KW-0872">Ion channel impairing toxin</keyword>
<keyword id="KW-0528">Neurotoxin</keyword>
<keyword id="KW-0629">Postsynaptic neurotoxin</keyword>
<keyword id="KW-0964">Secreted</keyword>
<keyword id="KW-0800">Toxin</keyword>
<accession>P01416</accession>
<dbReference type="PIR" id="A01686">
    <property type="entry name" value="N1EP1D"/>
</dbReference>
<dbReference type="PDB" id="1NTX">
    <property type="method" value="NMR"/>
    <property type="chains" value="A=1-60"/>
</dbReference>
<dbReference type="PDB" id="8V13">
    <property type="method" value="X-ray"/>
    <property type="resolution" value="1.80 A"/>
    <property type="chains" value="T/t=1-60"/>
</dbReference>
<dbReference type="PDBsum" id="1NTX"/>
<dbReference type="PDBsum" id="8V13"/>
<dbReference type="BMRB" id="P01416"/>
<dbReference type="SMR" id="P01416"/>
<dbReference type="EvolutionaryTrace" id="P01416"/>
<dbReference type="GO" id="GO:0005576">
    <property type="term" value="C:extracellular region"/>
    <property type="evidence" value="ECO:0007669"/>
    <property type="project" value="UniProtKB-SubCell"/>
</dbReference>
<dbReference type="GO" id="GO:0030550">
    <property type="term" value="F:acetylcholine receptor inhibitor activity"/>
    <property type="evidence" value="ECO:0007669"/>
    <property type="project" value="UniProtKB-KW"/>
</dbReference>
<dbReference type="GO" id="GO:0099106">
    <property type="term" value="F:ion channel regulator activity"/>
    <property type="evidence" value="ECO:0007669"/>
    <property type="project" value="UniProtKB-KW"/>
</dbReference>
<dbReference type="GO" id="GO:0090729">
    <property type="term" value="F:toxin activity"/>
    <property type="evidence" value="ECO:0007669"/>
    <property type="project" value="UniProtKB-KW"/>
</dbReference>
<dbReference type="CDD" id="cd00206">
    <property type="entry name" value="TFP_snake_toxin"/>
    <property type="match status" value="1"/>
</dbReference>
<dbReference type="FunFam" id="2.10.60.10:FF:000024">
    <property type="entry name" value="Cytotoxin 1"/>
    <property type="match status" value="1"/>
</dbReference>
<dbReference type="Gene3D" id="2.10.60.10">
    <property type="entry name" value="CD59"/>
    <property type="match status" value="1"/>
</dbReference>
<dbReference type="InterPro" id="IPR003571">
    <property type="entry name" value="Snake_3FTx"/>
</dbReference>
<dbReference type="InterPro" id="IPR045860">
    <property type="entry name" value="Snake_toxin-like_sf"/>
</dbReference>
<dbReference type="InterPro" id="IPR018354">
    <property type="entry name" value="Snake_toxin_con_site"/>
</dbReference>
<dbReference type="InterPro" id="IPR054131">
    <property type="entry name" value="Toxin_cobra-type"/>
</dbReference>
<dbReference type="Pfam" id="PF21947">
    <property type="entry name" value="Toxin_cobra-type"/>
    <property type="match status" value="1"/>
</dbReference>
<dbReference type="SUPFAM" id="SSF57302">
    <property type="entry name" value="Snake toxin-like"/>
    <property type="match status" value="1"/>
</dbReference>
<dbReference type="PROSITE" id="PS00272">
    <property type="entry name" value="SNAKE_TOXIN"/>
    <property type="match status" value="1"/>
</dbReference>
<sequence>RICYNHQSTTRATTKSCEENSCYKKYWRDHRGTIIERGCGCPKVKPGVGIHCCQSDKCNY</sequence>
<organism>
    <name type="scientific">Dendroaspis polylepis polylepis</name>
    <name type="common">Black mamba</name>
    <dbReference type="NCBI Taxonomy" id="8620"/>
    <lineage>
        <taxon>Eukaryota</taxon>
        <taxon>Metazoa</taxon>
        <taxon>Chordata</taxon>
        <taxon>Craniata</taxon>
        <taxon>Vertebrata</taxon>
        <taxon>Euteleostomi</taxon>
        <taxon>Lepidosauria</taxon>
        <taxon>Squamata</taxon>
        <taxon>Bifurcata</taxon>
        <taxon>Unidentata</taxon>
        <taxon>Episquamata</taxon>
        <taxon>Toxicofera</taxon>
        <taxon>Serpentes</taxon>
        <taxon>Colubroidea</taxon>
        <taxon>Elapidae</taxon>
        <taxon>Elapinae</taxon>
        <taxon>Dendroaspis</taxon>
    </lineage>
</organism>